<organism>
    <name type="scientific">Cuscuta gronovii</name>
    <name type="common">Common dodder</name>
    <name type="synonym">Epithymum gronovii</name>
    <dbReference type="NCBI Taxonomy" id="35886"/>
    <lineage>
        <taxon>Eukaryota</taxon>
        <taxon>Viridiplantae</taxon>
        <taxon>Streptophyta</taxon>
        <taxon>Embryophyta</taxon>
        <taxon>Tracheophyta</taxon>
        <taxon>Spermatophyta</taxon>
        <taxon>Magnoliopsida</taxon>
        <taxon>eudicotyledons</taxon>
        <taxon>Gunneridae</taxon>
        <taxon>Pentapetalae</taxon>
        <taxon>asterids</taxon>
        <taxon>lamiids</taxon>
        <taxon>Solanales</taxon>
        <taxon>Convolvulaceae</taxon>
        <taxon>Cuscuteae</taxon>
        <taxon>Cuscuta</taxon>
        <taxon>Cuscuta subgen. Grammica</taxon>
        <taxon>Cuscuta sect. Oxycarpae</taxon>
    </lineage>
</organism>
<geneLocation type="plastid"/>
<accession>A7M8Y6</accession>
<reference key="1">
    <citation type="journal article" date="2007" name="BMC Plant Biol.">
        <title>Complete DNA sequences of the plastid genomes of two parasitic flowering plant species, Cuscuta reflexa and Cuscuta gronovii.</title>
        <authorList>
            <person name="Funk H.T."/>
            <person name="Berg S."/>
            <person name="Krupinska K."/>
            <person name="Maier U.-G."/>
            <person name="Krause K."/>
        </authorList>
    </citation>
    <scope>NUCLEOTIDE SEQUENCE [LARGE SCALE GENOMIC DNA]</scope>
</reference>
<gene>
    <name evidence="1" type="primary">psbA</name>
</gene>
<sequence length="353" mass="38980">MTVVLDRRKSENLWGRFCNWITSTENRLYIGWFGVLMIPTLLTATSVFLIAFIAAPPVDIDGIREPVSGSLLYGNNIISGAIIPTSAAIGLHFYPIWEAASIAEWLYNGGPYELIVLHFLLGVACYMGREWELSFRLGMRPWIAIAYSAPVAAATAVFLIYPIGQGSFSDGMPLGISGTFNFMIVFQAEHNILMHPFHMLGVAGVFGGSLFSAMHGSLVTSSLIRETTESESANKGYKFGQEEETYNIVAAHGYFGRLIFQYASFNNSRSLHFFLAAWPVIGIWFTALGISTMAFNLNGFNFNQSVVDSKGHVINTWADIINRANLGMEVMHERNAHNFPLDLATFEVSATNA</sequence>
<name>PSBA_CUSGR</name>
<proteinExistence type="inferred from homology"/>
<dbReference type="EC" id="1.10.3.9" evidence="1"/>
<dbReference type="EMBL" id="AM711639">
    <property type="protein sequence ID" value="CAM98314.1"/>
    <property type="status" value="ALT_INIT"/>
    <property type="molecule type" value="Genomic_DNA"/>
</dbReference>
<dbReference type="RefSeq" id="YP_001430028.2">
    <property type="nucleotide sequence ID" value="NC_009765.1"/>
</dbReference>
<dbReference type="SMR" id="A7M8Y6"/>
<dbReference type="GeneID" id="5536746"/>
<dbReference type="GO" id="GO:0009535">
    <property type="term" value="C:chloroplast thylakoid membrane"/>
    <property type="evidence" value="ECO:0007669"/>
    <property type="project" value="TreeGrafter"/>
</dbReference>
<dbReference type="GO" id="GO:0009523">
    <property type="term" value="C:photosystem II"/>
    <property type="evidence" value="ECO:0007669"/>
    <property type="project" value="UniProtKB-KW"/>
</dbReference>
<dbReference type="GO" id="GO:0016168">
    <property type="term" value="F:chlorophyll binding"/>
    <property type="evidence" value="ECO:0007669"/>
    <property type="project" value="UniProtKB-UniRule"/>
</dbReference>
<dbReference type="GO" id="GO:0045156">
    <property type="term" value="F:electron transporter, transferring electrons within the cyclic electron transport pathway of photosynthesis activity"/>
    <property type="evidence" value="ECO:0007669"/>
    <property type="project" value="InterPro"/>
</dbReference>
<dbReference type="GO" id="GO:0005506">
    <property type="term" value="F:iron ion binding"/>
    <property type="evidence" value="ECO:0007669"/>
    <property type="project" value="UniProtKB-UniRule"/>
</dbReference>
<dbReference type="GO" id="GO:0016682">
    <property type="term" value="F:oxidoreductase activity, acting on diphenols and related substances as donors, oxygen as acceptor"/>
    <property type="evidence" value="ECO:0007669"/>
    <property type="project" value="UniProtKB-UniRule"/>
</dbReference>
<dbReference type="GO" id="GO:0010242">
    <property type="term" value="F:oxygen evolving activity"/>
    <property type="evidence" value="ECO:0007669"/>
    <property type="project" value="UniProtKB-EC"/>
</dbReference>
<dbReference type="GO" id="GO:0009772">
    <property type="term" value="P:photosynthetic electron transport in photosystem II"/>
    <property type="evidence" value="ECO:0007669"/>
    <property type="project" value="InterPro"/>
</dbReference>
<dbReference type="GO" id="GO:0009635">
    <property type="term" value="P:response to herbicide"/>
    <property type="evidence" value="ECO:0007669"/>
    <property type="project" value="UniProtKB-KW"/>
</dbReference>
<dbReference type="CDD" id="cd09289">
    <property type="entry name" value="Photosystem-II_D1"/>
    <property type="match status" value="1"/>
</dbReference>
<dbReference type="FunFam" id="1.20.85.10:FF:000002">
    <property type="entry name" value="Photosystem II protein D1"/>
    <property type="match status" value="1"/>
</dbReference>
<dbReference type="Gene3D" id="1.20.85.10">
    <property type="entry name" value="Photosystem II protein D1-like"/>
    <property type="match status" value="1"/>
</dbReference>
<dbReference type="HAMAP" id="MF_01379">
    <property type="entry name" value="PSII_PsbA_D1"/>
    <property type="match status" value="1"/>
</dbReference>
<dbReference type="InterPro" id="IPR055266">
    <property type="entry name" value="D1/D2"/>
</dbReference>
<dbReference type="InterPro" id="IPR036854">
    <property type="entry name" value="Photo_II_D1/D2_sf"/>
</dbReference>
<dbReference type="InterPro" id="IPR000484">
    <property type="entry name" value="Photo_RC_L/M"/>
</dbReference>
<dbReference type="InterPro" id="IPR055265">
    <property type="entry name" value="Photo_RC_L/M_CS"/>
</dbReference>
<dbReference type="InterPro" id="IPR005867">
    <property type="entry name" value="PSII_D1"/>
</dbReference>
<dbReference type="NCBIfam" id="TIGR01151">
    <property type="entry name" value="psbA"/>
    <property type="match status" value="1"/>
</dbReference>
<dbReference type="PANTHER" id="PTHR33149:SF12">
    <property type="entry name" value="PHOTOSYSTEM II D2 PROTEIN"/>
    <property type="match status" value="1"/>
</dbReference>
<dbReference type="PANTHER" id="PTHR33149">
    <property type="entry name" value="PHOTOSYSTEM II PROTEIN D1"/>
    <property type="match status" value="1"/>
</dbReference>
<dbReference type="Pfam" id="PF00124">
    <property type="entry name" value="Photo_RC"/>
    <property type="match status" value="1"/>
</dbReference>
<dbReference type="PRINTS" id="PR00256">
    <property type="entry name" value="REACTNCENTRE"/>
</dbReference>
<dbReference type="SUPFAM" id="SSF81483">
    <property type="entry name" value="Bacterial photosystem II reaction centre, L and M subunits"/>
    <property type="match status" value="1"/>
</dbReference>
<dbReference type="PROSITE" id="PS00244">
    <property type="entry name" value="REACTION_CENTER"/>
    <property type="match status" value="1"/>
</dbReference>
<keyword id="KW-0007">Acetylation</keyword>
<keyword id="KW-0106">Calcium</keyword>
<keyword id="KW-0148">Chlorophyll</keyword>
<keyword id="KW-0157">Chromophore</keyword>
<keyword id="KW-0249">Electron transport</keyword>
<keyword id="KW-0359">Herbicide resistance</keyword>
<keyword id="KW-0408">Iron</keyword>
<keyword id="KW-0460">Magnesium</keyword>
<keyword id="KW-0464">Manganese</keyword>
<keyword id="KW-0472">Membrane</keyword>
<keyword id="KW-0479">Metal-binding</keyword>
<keyword id="KW-0560">Oxidoreductase</keyword>
<keyword id="KW-0597">Phosphoprotein</keyword>
<keyword id="KW-0602">Photosynthesis</keyword>
<keyword id="KW-0604">Photosystem II</keyword>
<keyword id="KW-0934">Plastid</keyword>
<keyword id="KW-0812">Transmembrane</keyword>
<keyword id="KW-1133">Transmembrane helix</keyword>
<keyword id="KW-0813">Transport</keyword>
<comment type="function">
    <text evidence="1">Photosystem II (PSII) is a light-driven water:plastoquinone oxidoreductase that uses light energy to abstract electrons from H(2)O, generating O(2) and a proton gradient subsequently used for ATP formation. It consists of a core antenna complex that captures photons, and an electron transfer chain that converts photonic excitation into a charge separation. The D1/D2 (PsbA/PsbD) reaction center heterodimer binds P680, the primary electron donor of PSII as well as several subsequent electron acceptors.</text>
</comment>
<comment type="catalytic activity">
    <reaction evidence="1">
        <text>2 a plastoquinone + 4 hnu + 2 H2O = 2 a plastoquinol + O2</text>
        <dbReference type="Rhea" id="RHEA:36359"/>
        <dbReference type="Rhea" id="RHEA-COMP:9561"/>
        <dbReference type="Rhea" id="RHEA-COMP:9562"/>
        <dbReference type="ChEBI" id="CHEBI:15377"/>
        <dbReference type="ChEBI" id="CHEBI:15379"/>
        <dbReference type="ChEBI" id="CHEBI:17757"/>
        <dbReference type="ChEBI" id="CHEBI:30212"/>
        <dbReference type="ChEBI" id="CHEBI:62192"/>
        <dbReference type="EC" id="1.10.3.9"/>
    </reaction>
</comment>
<comment type="cofactor">
    <text evidence="1">The D1/D2 heterodimer binds P680, chlorophylls that are the primary electron donor of PSII, and subsequent electron acceptors. It shares a non-heme iron and each subunit binds pheophytin, quinone, additional chlorophylls, carotenoids and lipids. D1 provides most of the ligands for the Mn4-Ca-O5 cluster of the oxygen-evolving complex (OEC). There is also a Cl(-1) ion associated with D1 and D2, which is required for oxygen evolution. The PSII complex binds additional chlorophylls, carotenoids and specific lipids.</text>
</comment>
<comment type="subunit">
    <text evidence="1">PSII is composed of 1 copy each of membrane proteins PsbA, PsbB, PsbC, PsbD, PsbE, PsbF, PsbH, PsbI, PsbJ, PsbK, PsbL, PsbM, PsbT, PsbX, PsbY, PsbZ, Psb30/Ycf12, at least 3 peripheral proteins of the oxygen-evolving complex and a large number of cofactors. It forms dimeric complexes.</text>
</comment>
<comment type="subcellular location">
    <subcellularLocation>
        <location evidence="2">Plastid membrane</location>
        <topology evidence="1">Multi-pass membrane protein</topology>
    </subcellularLocation>
</comment>
<comment type="PTM">
    <text evidence="1">Tyr-161 forms a radical intermediate that is referred to as redox-active TyrZ, YZ or Y-Z.</text>
</comment>
<comment type="PTM">
    <text evidence="1">C-terminally processed by CTPA; processing is essential to allow assembly of the oxygen-evolving complex and thus photosynthetic growth.</text>
</comment>
<comment type="miscellaneous">
    <text evidence="1">2 of the reaction center chlorophylls (ChlD1 and ChlD2) are entirely coordinated by water.</text>
</comment>
<comment type="miscellaneous">
    <text evidence="1">Herbicides such as atrazine, BNT, diuron or ioxynil bind in the Q(B) binding site and block subsequent electron transfer.</text>
</comment>
<comment type="similarity">
    <text evidence="1">Belongs to the reaction center PufL/M/PsbA/D family.</text>
</comment>
<comment type="caution">
    <text evidence="2">Young tissue from this organism is photosynthetic and contains some thylakoids, although the photosynthetic activity does not exceed the light compensation point.</text>
</comment>
<comment type="sequence caution" evidence="2">
    <conflict type="erroneous initiation">
        <sequence resource="EMBL-CDS" id="CAM98314"/>
    </conflict>
    <text>Truncated N-terminus.</text>
</comment>
<feature type="initiator methionine" description="Removed" evidence="1">
    <location>
        <position position="1"/>
    </location>
</feature>
<feature type="chain" id="PRO_0000316448" description="Photosystem II protein D1" evidence="1">
    <location>
        <begin position="2"/>
        <end position="344"/>
    </location>
</feature>
<feature type="propeptide" id="PRO_0000316449" evidence="1">
    <location>
        <begin position="345"/>
        <end position="353"/>
    </location>
</feature>
<feature type="transmembrane region" description="Helical" evidence="1">
    <location>
        <begin position="29"/>
        <end position="46"/>
    </location>
</feature>
<feature type="transmembrane region" description="Helical" evidence="1">
    <location>
        <begin position="118"/>
        <end position="133"/>
    </location>
</feature>
<feature type="transmembrane region" description="Helical" evidence="1">
    <location>
        <begin position="142"/>
        <end position="156"/>
    </location>
</feature>
<feature type="transmembrane region" description="Helical" evidence="1">
    <location>
        <begin position="197"/>
        <end position="218"/>
    </location>
</feature>
<feature type="transmembrane region" description="Helical" evidence="1">
    <location>
        <begin position="274"/>
        <end position="288"/>
    </location>
</feature>
<feature type="binding site" description="axial binding residue" evidence="1">
    <location>
        <position position="118"/>
    </location>
    <ligand>
        <name>chlorophyll a</name>
        <dbReference type="ChEBI" id="CHEBI:58416"/>
        <label>ChlzD1</label>
    </ligand>
    <ligandPart>
        <name>Mg</name>
        <dbReference type="ChEBI" id="CHEBI:25107"/>
    </ligandPart>
</feature>
<feature type="binding site" evidence="1">
    <location>
        <position position="126"/>
    </location>
    <ligand>
        <name>pheophytin a</name>
        <dbReference type="ChEBI" id="CHEBI:136840"/>
        <label>D1</label>
    </ligand>
</feature>
<feature type="binding site" evidence="1">
    <location>
        <position position="170"/>
    </location>
    <ligand>
        <name>[CaMn4O5] cluster</name>
        <dbReference type="ChEBI" id="CHEBI:189552"/>
    </ligand>
</feature>
<feature type="binding site" evidence="1">
    <location>
        <position position="189"/>
    </location>
    <ligand>
        <name>[CaMn4O5] cluster</name>
        <dbReference type="ChEBI" id="CHEBI:189552"/>
    </ligand>
</feature>
<feature type="binding site" description="axial binding residue" evidence="1">
    <location>
        <position position="198"/>
    </location>
    <ligand>
        <name>chlorophyll a</name>
        <dbReference type="ChEBI" id="CHEBI:58416"/>
        <label>PD1</label>
    </ligand>
    <ligandPart>
        <name>Mg</name>
        <dbReference type="ChEBI" id="CHEBI:25107"/>
    </ligandPart>
</feature>
<feature type="binding site" evidence="1">
    <location>
        <position position="215"/>
    </location>
    <ligand>
        <name>a quinone</name>
        <dbReference type="ChEBI" id="CHEBI:132124"/>
        <label>B</label>
    </ligand>
</feature>
<feature type="binding site" evidence="1">
    <location>
        <position position="215"/>
    </location>
    <ligand>
        <name>Fe cation</name>
        <dbReference type="ChEBI" id="CHEBI:24875"/>
        <note>ligand shared with heterodimeric partner</note>
    </ligand>
</feature>
<feature type="binding site" evidence="1">
    <location>
        <begin position="264"/>
        <end position="265"/>
    </location>
    <ligand>
        <name>a quinone</name>
        <dbReference type="ChEBI" id="CHEBI:132124"/>
        <label>B</label>
    </ligand>
</feature>
<feature type="binding site" evidence="1">
    <location>
        <position position="272"/>
    </location>
    <ligand>
        <name>Fe cation</name>
        <dbReference type="ChEBI" id="CHEBI:24875"/>
        <note>ligand shared with heterodimeric partner</note>
    </ligand>
</feature>
<feature type="binding site" evidence="1">
    <location>
        <position position="332"/>
    </location>
    <ligand>
        <name>[CaMn4O5] cluster</name>
        <dbReference type="ChEBI" id="CHEBI:189552"/>
    </ligand>
</feature>
<feature type="binding site" evidence="1">
    <location>
        <position position="333"/>
    </location>
    <ligand>
        <name>[CaMn4O5] cluster</name>
        <dbReference type="ChEBI" id="CHEBI:189552"/>
    </ligand>
</feature>
<feature type="binding site" evidence="1">
    <location>
        <position position="342"/>
    </location>
    <ligand>
        <name>[CaMn4O5] cluster</name>
        <dbReference type="ChEBI" id="CHEBI:189552"/>
    </ligand>
</feature>
<feature type="binding site" evidence="1">
    <location>
        <position position="344"/>
    </location>
    <ligand>
        <name>[CaMn4O5] cluster</name>
        <dbReference type="ChEBI" id="CHEBI:189552"/>
    </ligand>
</feature>
<feature type="site" description="Tyrosine radical intermediate" evidence="1">
    <location>
        <position position="161"/>
    </location>
</feature>
<feature type="site" description="Stabilizes free radical intermediate" evidence="1">
    <location>
        <position position="190"/>
    </location>
</feature>
<feature type="site" description="Cleavage; by CTPA" evidence="1">
    <location>
        <begin position="344"/>
        <end position="345"/>
    </location>
</feature>
<feature type="modified residue" description="N-acetylthreonine" evidence="1">
    <location>
        <position position="2"/>
    </location>
</feature>
<feature type="modified residue" description="Phosphothreonine" evidence="1">
    <location>
        <position position="2"/>
    </location>
</feature>
<protein>
    <recommendedName>
        <fullName evidence="1">Photosystem II protein D1</fullName>
        <shortName evidence="1">PSII D1 protein</shortName>
        <ecNumber evidence="1">1.10.3.9</ecNumber>
    </recommendedName>
    <alternativeName>
        <fullName evidence="1">Photosystem II Q(B) protein</fullName>
    </alternativeName>
</protein>
<evidence type="ECO:0000255" key="1">
    <source>
        <dbReference type="HAMAP-Rule" id="MF_01379"/>
    </source>
</evidence>
<evidence type="ECO:0000305" key="2"/>